<sequence>MEKCEGIVIRQTSYRESDKIVRMYTREFGKIGVVARGAKKTKSRLAAVTQLFTNGYFTFFGGNGLGTLQQGEVIETFSSIQQDIFMTAYATYVCELLDKATEERQPNPYLYELTFQILRDIDEGYDPQILTQIYEMKMLPVLGLYPTMDKCAICGETTGHFDFSTSSNGIICHRCFEKDRYRMHLPENVVKLLRLFFIFQLDRLGNIDVKQETKDWLQKAIDTYYDEYSGLYLKSRKFIREMDKWENMLKKDSDD</sequence>
<comment type="function">
    <text evidence="1">Involved in DNA repair and RecF pathway recombination.</text>
</comment>
<comment type="similarity">
    <text evidence="2">Belongs to the RecO family.</text>
</comment>
<reference key="1">
    <citation type="journal article" date="2001" name="Science">
        <title>Comparative genomics of Listeria species.</title>
        <authorList>
            <person name="Glaser P."/>
            <person name="Frangeul L."/>
            <person name="Buchrieser C."/>
            <person name="Rusniok C."/>
            <person name="Amend A."/>
            <person name="Baquero F."/>
            <person name="Berche P."/>
            <person name="Bloecker H."/>
            <person name="Brandt P."/>
            <person name="Chakraborty T."/>
            <person name="Charbit A."/>
            <person name="Chetouani F."/>
            <person name="Couve E."/>
            <person name="de Daruvar A."/>
            <person name="Dehoux P."/>
            <person name="Domann E."/>
            <person name="Dominguez-Bernal G."/>
            <person name="Duchaud E."/>
            <person name="Durant L."/>
            <person name="Dussurget O."/>
            <person name="Entian K.-D."/>
            <person name="Fsihi H."/>
            <person name="Garcia-del Portillo F."/>
            <person name="Garrido P."/>
            <person name="Gautier L."/>
            <person name="Goebel W."/>
            <person name="Gomez-Lopez N."/>
            <person name="Hain T."/>
            <person name="Hauf J."/>
            <person name="Jackson D."/>
            <person name="Jones L.-M."/>
            <person name="Kaerst U."/>
            <person name="Kreft J."/>
            <person name="Kuhn M."/>
            <person name="Kunst F."/>
            <person name="Kurapkat G."/>
            <person name="Madueno E."/>
            <person name="Maitournam A."/>
            <person name="Mata Vicente J."/>
            <person name="Ng E."/>
            <person name="Nedjari H."/>
            <person name="Nordsiek G."/>
            <person name="Novella S."/>
            <person name="de Pablos B."/>
            <person name="Perez-Diaz J.-C."/>
            <person name="Purcell R."/>
            <person name="Remmel B."/>
            <person name="Rose M."/>
            <person name="Schlueter T."/>
            <person name="Simoes N."/>
            <person name="Tierrez A."/>
            <person name="Vazquez-Boland J.-A."/>
            <person name="Voss H."/>
            <person name="Wehland J."/>
            <person name="Cossart P."/>
        </authorList>
    </citation>
    <scope>NUCLEOTIDE SEQUENCE [LARGE SCALE GENOMIC DNA]</scope>
    <source>
        <strain>ATCC BAA-679 / EGD-e</strain>
    </source>
</reference>
<proteinExistence type="inferred from homology"/>
<dbReference type="EMBL" id="AL591979">
    <property type="protein sequence ID" value="CAC99538.1"/>
    <property type="molecule type" value="Genomic_DNA"/>
</dbReference>
<dbReference type="PIR" id="AD1257">
    <property type="entry name" value="AD1257"/>
</dbReference>
<dbReference type="RefSeq" id="NP_464985.1">
    <property type="nucleotide sequence ID" value="NC_003210.1"/>
</dbReference>
<dbReference type="RefSeq" id="WP_003730435.1">
    <property type="nucleotide sequence ID" value="NZ_CP149495.1"/>
</dbReference>
<dbReference type="SMR" id="Q8Y752"/>
<dbReference type="STRING" id="169963.gene:17594117"/>
<dbReference type="PaxDb" id="169963-lmo1460"/>
<dbReference type="EnsemblBacteria" id="CAC99538">
    <property type="protein sequence ID" value="CAC99538"/>
    <property type="gene ID" value="CAC99538"/>
</dbReference>
<dbReference type="GeneID" id="987669"/>
<dbReference type="KEGG" id="lmo:lmo1460"/>
<dbReference type="PATRIC" id="fig|169963.11.peg.1499"/>
<dbReference type="eggNOG" id="COG1381">
    <property type="taxonomic scope" value="Bacteria"/>
</dbReference>
<dbReference type="HOGENOM" id="CLU_066632_4_0_9"/>
<dbReference type="OrthoDB" id="9797083at2"/>
<dbReference type="PhylomeDB" id="Q8Y752"/>
<dbReference type="BioCyc" id="LMON169963:LMO1460-MONOMER"/>
<dbReference type="Proteomes" id="UP000000817">
    <property type="component" value="Chromosome"/>
</dbReference>
<dbReference type="GO" id="GO:0043590">
    <property type="term" value="C:bacterial nucleoid"/>
    <property type="evidence" value="ECO:0000318"/>
    <property type="project" value="GO_Central"/>
</dbReference>
<dbReference type="GO" id="GO:0006310">
    <property type="term" value="P:DNA recombination"/>
    <property type="evidence" value="ECO:0007669"/>
    <property type="project" value="UniProtKB-UniRule"/>
</dbReference>
<dbReference type="GO" id="GO:0006302">
    <property type="term" value="P:double-strand break repair"/>
    <property type="evidence" value="ECO:0000318"/>
    <property type="project" value="GO_Central"/>
</dbReference>
<dbReference type="Gene3D" id="2.40.50.140">
    <property type="entry name" value="Nucleic acid-binding proteins"/>
    <property type="match status" value="1"/>
</dbReference>
<dbReference type="Gene3D" id="1.20.1440.120">
    <property type="entry name" value="Recombination protein O, C-terminal domain"/>
    <property type="match status" value="1"/>
</dbReference>
<dbReference type="HAMAP" id="MF_00201">
    <property type="entry name" value="RecO"/>
    <property type="match status" value="1"/>
</dbReference>
<dbReference type="InterPro" id="IPR037278">
    <property type="entry name" value="ARFGAP/RecO"/>
</dbReference>
<dbReference type="InterPro" id="IPR022572">
    <property type="entry name" value="DNA_rep/recomb_RecO_N"/>
</dbReference>
<dbReference type="InterPro" id="IPR012340">
    <property type="entry name" value="NA-bd_OB-fold"/>
</dbReference>
<dbReference type="InterPro" id="IPR003717">
    <property type="entry name" value="RecO"/>
</dbReference>
<dbReference type="InterPro" id="IPR042242">
    <property type="entry name" value="RecO_C"/>
</dbReference>
<dbReference type="NCBIfam" id="TIGR00613">
    <property type="entry name" value="reco"/>
    <property type="match status" value="1"/>
</dbReference>
<dbReference type="PANTHER" id="PTHR33991">
    <property type="entry name" value="DNA REPAIR PROTEIN RECO"/>
    <property type="match status" value="1"/>
</dbReference>
<dbReference type="PANTHER" id="PTHR33991:SF1">
    <property type="entry name" value="DNA REPAIR PROTEIN RECO"/>
    <property type="match status" value="1"/>
</dbReference>
<dbReference type="Pfam" id="PF02565">
    <property type="entry name" value="RecO_C"/>
    <property type="match status" value="1"/>
</dbReference>
<dbReference type="Pfam" id="PF11967">
    <property type="entry name" value="RecO_N"/>
    <property type="match status" value="1"/>
</dbReference>
<dbReference type="SUPFAM" id="SSF57863">
    <property type="entry name" value="ArfGap/RecO-like zinc finger"/>
    <property type="match status" value="1"/>
</dbReference>
<dbReference type="SUPFAM" id="SSF50249">
    <property type="entry name" value="Nucleic acid-binding proteins"/>
    <property type="match status" value="1"/>
</dbReference>
<evidence type="ECO:0000250" key="1"/>
<evidence type="ECO:0000305" key="2"/>
<gene>
    <name type="primary">recO</name>
    <name type="ordered locus">lmo1460</name>
</gene>
<accession>Q8Y752</accession>
<protein>
    <recommendedName>
        <fullName>DNA repair protein RecO</fullName>
    </recommendedName>
    <alternativeName>
        <fullName>Recombination protein O</fullName>
    </alternativeName>
</protein>
<feature type="chain" id="PRO_0000204967" description="DNA repair protein RecO">
    <location>
        <begin position="1"/>
        <end position="255"/>
    </location>
</feature>
<organism>
    <name type="scientific">Listeria monocytogenes serovar 1/2a (strain ATCC BAA-679 / EGD-e)</name>
    <dbReference type="NCBI Taxonomy" id="169963"/>
    <lineage>
        <taxon>Bacteria</taxon>
        <taxon>Bacillati</taxon>
        <taxon>Bacillota</taxon>
        <taxon>Bacilli</taxon>
        <taxon>Bacillales</taxon>
        <taxon>Listeriaceae</taxon>
        <taxon>Listeria</taxon>
    </lineage>
</organism>
<name>RECO_LISMO</name>
<keyword id="KW-0227">DNA damage</keyword>
<keyword id="KW-0233">DNA recombination</keyword>
<keyword id="KW-0234">DNA repair</keyword>
<keyword id="KW-1185">Reference proteome</keyword>